<dbReference type="EC" id="2.1.1.-" evidence="1"/>
<dbReference type="EMBL" id="CP000033">
    <property type="protein sequence ID" value="AAV43631.1"/>
    <property type="molecule type" value="Genomic_DNA"/>
</dbReference>
<dbReference type="RefSeq" id="WP_003549696.1">
    <property type="nucleotide sequence ID" value="NC_006814.3"/>
</dbReference>
<dbReference type="RefSeq" id="YP_194662.1">
    <property type="nucleotide sequence ID" value="NC_006814.3"/>
</dbReference>
<dbReference type="SMR" id="Q5FI43"/>
<dbReference type="STRING" id="272621.LBA1829"/>
<dbReference type="GeneID" id="93291031"/>
<dbReference type="KEGG" id="lac:LBA1829"/>
<dbReference type="PATRIC" id="fig|272621.13.peg.1738"/>
<dbReference type="eggNOG" id="COG0357">
    <property type="taxonomic scope" value="Bacteria"/>
</dbReference>
<dbReference type="HOGENOM" id="CLU_065341_0_0_9"/>
<dbReference type="OrthoDB" id="9808773at2"/>
<dbReference type="BioCyc" id="LACI272621:G1G49-1786-MONOMER"/>
<dbReference type="Proteomes" id="UP000006381">
    <property type="component" value="Chromosome"/>
</dbReference>
<dbReference type="GO" id="GO:0005829">
    <property type="term" value="C:cytosol"/>
    <property type="evidence" value="ECO:0007669"/>
    <property type="project" value="TreeGrafter"/>
</dbReference>
<dbReference type="GO" id="GO:0070043">
    <property type="term" value="F:rRNA (guanine-N7-)-methyltransferase activity"/>
    <property type="evidence" value="ECO:0007669"/>
    <property type="project" value="UniProtKB-UniRule"/>
</dbReference>
<dbReference type="CDD" id="cd02440">
    <property type="entry name" value="AdoMet_MTases"/>
    <property type="match status" value="1"/>
</dbReference>
<dbReference type="FunFam" id="3.40.50.150:FF:000041">
    <property type="entry name" value="Ribosomal RNA small subunit methyltransferase G"/>
    <property type="match status" value="1"/>
</dbReference>
<dbReference type="Gene3D" id="3.40.50.150">
    <property type="entry name" value="Vaccinia Virus protein VP39"/>
    <property type="match status" value="1"/>
</dbReference>
<dbReference type="HAMAP" id="MF_00074">
    <property type="entry name" value="16SrRNA_methyltr_G"/>
    <property type="match status" value="1"/>
</dbReference>
<dbReference type="InterPro" id="IPR003682">
    <property type="entry name" value="rRNA_ssu_MeTfrase_G"/>
</dbReference>
<dbReference type="InterPro" id="IPR029063">
    <property type="entry name" value="SAM-dependent_MTases_sf"/>
</dbReference>
<dbReference type="NCBIfam" id="TIGR00138">
    <property type="entry name" value="rsmG_gidB"/>
    <property type="match status" value="1"/>
</dbReference>
<dbReference type="PANTHER" id="PTHR31760">
    <property type="entry name" value="S-ADENOSYL-L-METHIONINE-DEPENDENT METHYLTRANSFERASES SUPERFAMILY PROTEIN"/>
    <property type="match status" value="1"/>
</dbReference>
<dbReference type="PANTHER" id="PTHR31760:SF0">
    <property type="entry name" value="S-ADENOSYL-L-METHIONINE-DEPENDENT METHYLTRANSFERASES SUPERFAMILY PROTEIN"/>
    <property type="match status" value="1"/>
</dbReference>
<dbReference type="Pfam" id="PF02527">
    <property type="entry name" value="GidB"/>
    <property type="match status" value="1"/>
</dbReference>
<dbReference type="PIRSF" id="PIRSF003078">
    <property type="entry name" value="GidB"/>
    <property type="match status" value="1"/>
</dbReference>
<dbReference type="SUPFAM" id="SSF53335">
    <property type="entry name" value="S-adenosyl-L-methionine-dependent methyltransferases"/>
    <property type="match status" value="1"/>
</dbReference>
<gene>
    <name evidence="1" type="primary">rsmG</name>
    <name type="ordered locus">LBA1829</name>
</gene>
<name>RSMG_LACAC</name>
<feature type="chain" id="PRO_0000184266" description="Ribosomal RNA small subunit methyltransferase G">
    <location>
        <begin position="1"/>
        <end position="240"/>
    </location>
</feature>
<feature type="binding site" evidence="1">
    <location>
        <position position="79"/>
    </location>
    <ligand>
        <name>S-adenosyl-L-methionine</name>
        <dbReference type="ChEBI" id="CHEBI:59789"/>
    </ligand>
</feature>
<feature type="binding site" evidence="1">
    <location>
        <position position="84"/>
    </location>
    <ligand>
        <name>S-adenosyl-L-methionine</name>
        <dbReference type="ChEBI" id="CHEBI:59789"/>
    </ligand>
</feature>
<feature type="binding site" evidence="1">
    <location>
        <begin position="130"/>
        <end position="131"/>
    </location>
    <ligand>
        <name>S-adenosyl-L-methionine</name>
        <dbReference type="ChEBI" id="CHEBI:59789"/>
    </ligand>
</feature>
<feature type="binding site" evidence="1">
    <location>
        <position position="149"/>
    </location>
    <ligand>
        <name>S-adenosyl-L-methionine</name>
        <dbReference type="ChEBI" id="CHEBI:59789"/>
    </ligand>
</feature>
<reference key="1">
    <citation type="journal article" date="2005" name="Proc. Natl. Acad. Sci. U.S.A.">
        <title>Complete genome sequence of the probiotic lactic acid bacterium Lactobacillus acidophilus NCFM.</title>
        <authorList>
            <person name="Altermann E."/>
            <person name="Russell W.M."/>
            <person name="Azcarate-Peril M.A."/>
            <person name="Barrangou R."/>
            <person name="Buck B.L."/>
            <person name="McAuliffe O."/>
            <person name="Souther N."/>
            <person name="Dobson A."/>
            <person name="Duong T."/>
            <person name="Callanan M."/>
            <person name="Lick S."/>
            <person name="Hamrick A."/>
            <person name="Cano R."/>
            <person name="Klaenhammer T.R."/>
        </authorList>
    </citation>
    <scope>NUCLEOTIDE SEQUENCE [LARGE SCALE GENOMIC DNA]</scope>
    <source>
        <strain>ATCC 700396 / NCK56 / N2 / NCFM</strain>
    </source>
</reference>
<organism>
    <name type="scientific">Lactobacillus acidophilus (strain ATCC 700396 / NCK56 / N2 / NCFM)</name>
    <dbReference type="NCBI Taxonomy" id="272621"/>
    <lineage>
        <taxon>Bacteria</taxon>
        <taxon>Bacillati</taxon>
        <taxon>Bacillota</taxon>
        <taxon>Bacilli</taxon>
        <taxon>Lactobacillales</taxon>
        <taxon>Lactobacillaceae</taxon>
        <taxon>Lactobacillus</taxon>
    </lineage>
</organism>
<proteinExistence type="inferred from homology"/>
<keyword id="KW-0963">Cytoplasm</keyword>
<keyword id="KW-0489">Methyltransferase</keyword>
<keyword id="KW-1185">Reference proteome</keyword>
<keyword id="KW-0698">rRNA processing</keyword>
<keyword id="KW-0949">S-adenosyl-L-methionine</keyword>
<keyword id="KW-0808">Transferase</keyword>
<accession>Q5FI43</accession>
<evidence type="ECO:0000255" key="1">
    <source>
        <dbReference type="HAMAP-Rule" id="MF_00074"/>
    </source>
</evidence>
<protein>
    <recommendedName>
        <fullName evidence="1">Ribosomal RNA small subunit methyltransferase G</fullName>
        <ecNumber evidence="1">2.1.1.-</ecNumber>
    </recommendedName>
    <alternativeName>
        <fullName evidence="1">16S rRNA 7-methylguanosine methyltransferase</fullName>
        <shortName evidence="1">16S rRNA m7G methyltransferase</shortName>
    </alternativeName>
</protein>
<sequence length="240" mass="27311">MNPEEFILELSKHNFELSDKQKQQFKLYFKYLIEVNEHVNLTRITEENEVYLKHFFDSVTPLFTFGEVFKDGATLCDVGAGAGFPSIPLKILNPTLKVTIVDSLAKRLTFLKNLIEKLGLTDVELVHGRAEDVGQNKLYREKFDLVTARAVARMSVLSEYCLPLVKKGGYFIALKGPKAEDELDDGQKALEVLGGKLVKEEELTLPHSKEERTLILVKKIKQTPKKYPRQAGTPRRKPIH</sequence>
<comment type="function">
    <text evidence="1">Specifically methylates the N7 position of a guanine in 16S rRNA.</text>
</comment>
<comment type="subcellular location">
    <subcellularLocation>
        <location evidence="1">Cytoplasm</location>
    </subcellularLocation>
</comment>
<comment type="similarity">
    <text evidence="1">Belongs to the methyltransferase superfamily. RNA methyltransferase RsmG family.</text>
</comment>